<proteinExistence type="inferred from homology"/>
<accession>A2S590</accession>
<comment type="function">
    <text evidence="1">An aminoacyl-tRNA editing enzyme that deacylates mischarged D-aminoacyl-tRNAs. Also deacylates mischarged glycyl-tRNA(Ala), protecting cells against glycine mischarging by AlaRS. Acts via tRNA-based rather than protein-based catalysis; rejects L-amino acids rather than detecting D-amino acids in the active site. By recycling D-aminoacyl-tRNA to D-amino acids and free tRNA molecules, this enzyme counteracts the toxicity associated with the formation of D-aminoacyl-tRNA entities in vivo and helps enforce protein L-homochirality.</text>
</comment>
<comment type="catalytic activity">
    <reaction evidence="1">
        <text>glycyl-tRNA(Ala) + H2O = tRNA(Ala) + glycine + H(+)</text>
        <dbReference type="Rhea" id="RHEA:53744"/>
        <dbReference type="Rhea" id="RHEA-COMP:9657"/>
        <dbReference type="Rhea" id="RHEA-COMP:13640"/>
        <dbReference type="ChEBI" id="CHEBI:15377"/>
        <dbReference type="ChEBI" id="CHEBI:15378"/>
        <dbReference type="ChEBI" id="CHEBI:57305"/>
        <dbReference type="ChEBI" id="CHEBI:78442"/>
        <dbReference type="ChEBI" id="CHEBI:78522"/>
        <dbReference type="EC" id="3.1.1.96"/>
    </reaction>
</comment>
<comment type="catalytic activity">
    <reaction evidence="1">
        <text>a D-aminoacyl-tRNA + H2O = a tRNA + a D-alpha-amino acid + H(+)</text>
        <dbReference type="Rhea" id="RHEA:13953"/>
        <dbReference type="Rhea" id="RHEA-COMP:10123"/>
        <dbReference type="Rhea" id="RHEA-COMP:10124"/>
        <dbReference type="ChEBI" id="CHEBI:15377"/>
        <dbReference type="ChEBI" id="CHEBI:15378"/>
        <dbReference type="ChEBI" id="CHEBI:59871"/>
        <dbReference type="ChEBI" id="CHEBI:78442"/>
        <dbReference type="ChEBI" id="CHEBI:79333"/>
        <dbReference type="EC" id="3.1.1.96"/>
    </reaction>
</comment>
<comment type="subunit">
    <text evidence="1">Homodimer.</text>
</comment>
<comment type="subcellular location">
    <subcellularLocation>
        <location evidence="1">Cytoplasm</location>
    </subcellularLocation>
</comment>
<comment type="domain">
    <text evidence="1">A Gly-cisPro motif from one monomer fits into the active site of the other monomer to allow specific chiral rejection of L-amino acids.</text>
</comment>
<comment type="similarity">
    <text evidence="1">Belongs to the DTD family.</text>
</comment>
<keyword id="KW-0963">Cytoplasm</keyword>
<keyword id="KW-0378">Hydrolase</keyword>
<keyword id="KW-0694">RNA-binding</keyword>
<keyword id="KW-0820">tRNA-binding</keyword>
<sequence>MIALIQRVKRADVRVGERVTGEIGPGLLALVCAERGDTEAAADKLLAKVLGYRVFSDAAGKMNLPVSNLDGAGRAGGLLLVSQFTLAADTNSGLRPSFTPAAPPDEGERLFDYFVRRARERHPIVATGEFGADMQVSLVNDGPVTFWLQTRA</sequence>
<name>DTD_BURM9</name>
<organism>
    <name type="scientific">Burkholderia mallei (strain NCTC 10229)</name>
    <dbReference type="NCBI Taxonomy" id="412022"/>
    <lineage>
        <taxon>Bacteria</taxon>
        <taxon>Pseudomonadati</taxon>
        <taxon>Pseudomonadota</taxon>
        <taxon>Betaproteobacteria</taxon>
        <taxon>Burkholderiales</taxon>
        <taxon>Burkholderiaceae</taxon>
        <taxon>Burkholderia</taxon>
        <taxon>pseudomallei group</taxon>
    </lineage>
</organism>
<reference key="1">
    <citation type="journal article" date="2010" name="Genome Biol. Evol.">
        <title>Continuing evolution of Burkholderia mallei through genome reduction and large-scale rearrangements.</title>
        <authorList>
            <person name="Losada L."/>
            <person name="Ronning C.M."/>
            <person name="DeShazer D."/>
            <person name="Woods D."/>
            <person name="Fedorova N."/>
            <person name="Kim H.S."/>
            <person name="Shabalina S.A."/>
            <person name="Pearson T.R."/>
            <person name="Brinkac L."/>
            <person name="Tan P."/>
            <person name="Nandi T."/>
            <person name="Crabtree J."/>
            <person name="Badger J."/>
            <person name="Beckstrom-Sternberg S."/>
            <person name="Saqib M."/>
            <person name="Schutzer S.E."/>
            <person name="Keim P."/>
            <person name="Nierman W.C."/>
        </authorList>
    </citation>
    <scope>NUCLEOTIDE SEQUENCE [LARGE SCALE GENOMIC DNA]</scope>
    <source>
        <strain>NCTC 10229</strain>
    </source>
</reference>
<evidence type="ECO:0000255" key="1">
    <source>
        <dbReference type="HAMAP-Rule" id="MF_00518"/>
    </source>
</evidence>
<protein>
    <recommendedName>
        <fullName evidence="1">D-aminoacyl-tRNA deacylase</fullName>
        <shortName evidence="1">DTD</shortName>
        <ecNumber evidence="1">3.1.1.96</ecNumber>
    </recommendedName>
    <alternativeName>
        <fullName evidence="1">Gly-tRNA(Ala) deacylase</fullName>
    </alternativeName>
</protein>
<gene>
    <name evidence="1" type="primary">dtd</name>
    <name type="ordered locus">BMA10229_A1124</name>
</gene>
<dbReference type="EC" id="3.1.1.96" evidence="1"/>
<dbReference type="EMBL" id="CP000546">
    <property type="protein sequence ID" value="ABN00729.1"/>
    <property type="molecule type" value="Genomic_DNA"/>
</dbReference>
<dbReference type="RefSeq" id="WP_004200499.1">
    <property type="nucleotide sequence ID" value="NC_008836.1"/>
</dbReference>
<dbReference type="SMR" id="A2S590"/>
<dbReference type="GeneID" id="93061498"/>
<dbReference type="KEGG" id="bml:BMA10229_A1124"/>
<dbReference type="HOGENOM" id="CLU_076901_1_1_4"/>
<dbReference type="Proteomes" id="UP000002283">
    <property type="component" value="Chromosome I"/>
</dbReference>
<dbReference type="GO" id="GO:0005737">
    <property type="term" value="C:cytoplasm"/>
    <property type="evidence" value="ECO:0007669"/>
    <property type="project" value="UniProtKB-SubCell"/>
</dbReference>
<dbReference type="GO" id="GO:0051500">
    <property type="term" value="F:D-tyrosyl-tRNA(Tyr) deacylase activity"/>
    <property type="evidence" value="ECO:0007669"/>
    <property type="project" value="TreeGrafter"/>
</dbReference>
<dbReference type="GO" id="GO:0106026">
    <property type="term" value="F:Gly-tRNA(Ala) deacylase activity"/>
    <property type="evidence" value="ECO:0007669"/>
    <property type="project" value="UniProtKB-UniRule"/>
</dbReference>
<dbReference type="GO" id="GO:0043908">
    <property type="term" value="F:Ser(Gly)-tRNA(Ala) hydrolase activity"/>
    <property type="evidence" value="ECO:0007669"/>
    <property type="project" value="UniProtKB-UniRule"/>
</dbReference>
<dbReference type="GO" id="GO:0000049">
    <property type="term" value="F:tRNA binding"/>
    <property type="evidence" value="ECO:0007669"/>
    <property type="project" value="UniProtKB-UniRule"/>
</dbReference>
<dbReference type="GO" id="GO:0019478">
    <property type="term" value="P:D-amino acid catabolic process"/>
    <property type="evidence" value="ECO:0007669"/>
    <property type="project" value="UniProtKB-UniRule"/>
</dbReference>
<dbReference type="CDD" id="cd00563">
    <property type="entry name" value="Dtyr_deacylase"/>
    <property type="match status" value="1"/>
</dbReference>
<dbReference type="FunFam" id="3.50.80.10:FF:000001">
    <property type="entry name" value="D-aminoacyl-tRNA deacylase"/>
    <property type="match status" value="1"/>
</dbReference>
<dbReference type="Gene3D" id="3.50.80.10">
    <property type="entry name" value="D-tyrosyl-tRNA(Tyr) deacylase"/>
    <property type="match status" value="1"/>
</dbReference>
<dbReference type="HAMAP" id="MF_00518">
    <property type="entry name" value="Deacylase_Dtd"/>
    <property type="match status" value="1"/>
</dbReference>
<dbReference type="InterPro" id="IPR003732">
    <property type="entry name" value="Daa-tRNA_deacyls_DTD"/>
</dbReference>
<dbReference type="InterPro" id="IPR023509">
    <property type="entry name" value="DTD-like_sf"/>
</dbReference>
<dbReference type="NCBIfam" id="TIGR00256">
    <property type="entry name" value="D-aminoacyl-tRNA deacylase"/>
    <property type="match status" value="1"/>
</dbReference>
<dbReference type="PANTHER" id="PTHR10472:SF5">
    <property type="entry name" value="D-AMINOACYL-TRNA DEACYLASE 1"/>
    <property type="match status" value="1"/>
</dbReference>
<dbReference type="PANTHER" id="PTHR10472">
    <property type="entry name" value="D-TYROSYL-TRNA TYR DEACYLASE"/>
    <property type="match status" value="1"/>
</dbReference>
<dbReference type="Pfam" id="PF02580">
    <property type="entry name" value="Tyr_Deacylase"/>
    <property type="match status" value="1"/>
</dbReference>
<dbReference type="SUPFAM" id="SSF69500">
    <property type="entry name" value="DTD-like"/>
    <property type="match status" value="1"/>
</dbReference>
<feature type="chain" id="PRO_1000050818" description="D-aminoacyl-tRNA deacylase">
    <location>
        <begin position="1"/>
        <end position="152"/>
    </location>
</feature>
<feature type="short sequence motif" description="Gly-cisPro motif, important for rejection of L-amino acids" evidence="1">
    <location>
        <begin position="142"/>
        <end position="143"/>
    </location>
</feature>